<feature type="chain" id="PRO_0000102101" description="Probable helicase HelY">
    <location>
        <begin position="1"/>
        <end position="920"/>
    </location>
</feature>
<feature type="domain" description="Helicase ATP-binding" evidence="1">
    <location>
        <begin position="26"/>
        <end position="184"/>
    </location>
</feature>
<feature type="domain" description="Helicase C-terminal" evidence="2">
    <location>
        <begin position="265"/>
        <end position="469"/>
    </location>
</feature>
<feature type="short sequence motif" description="DEVH box">
    <location>
        <begin position="132"/>
        <end position="135"/>
    </location>
</feature>
<feature type="binding site" evidence="1">
    <location>
        <begin position="39"/>
        <end position="46"/>
    </location>
    <ligand>
        <name>ATP</name>
        <dbReference type="ChEBI" id="CHEBI:30616"/>
    </ligand>
</feature>
<accession>Q9ZBD8</accession>
<protein>
    <recommendedName>
        <fullName>Probable helicase HelY</fullName>
        <ecNumber>3.6.4.-</ecNumber>
    </recommendedName>
</protein>
<comment type="similarity">
    <text evidence="3">Belongs to the helicase family. SKI2 subfamily.</text>
</comment>
<gene>
    <name type="primary">helY</name>
    <name type="ordered locus">ML1333</name>
    <name type="ORF">MLCB2533.29</name>
</gene>
<organism>
    <name type="scientific">Mycobacterium leprae (strain TN)</name>
    <dbReference type="NCBI Taxonomy" id="272631"/>
    <lineage>
        <taxon>Bacteria</taxon>
        <taxon>Bacillati</taxon>
        <taxon>Actinomycetota</taxon>
        <taxon>Actinomycetes</taxon>
        <taxon>Mycobacteriales</taxon>
        <taxon>Mycobacteriaceae</taxon>
        <taxon>Mycobacterium</taxon>
    </lineage>
</organism>
<proteinExistence type="inferred from homology"/>
<sequence>MTDLAELARFTAELPFSLDDFQQRACAALERGHGVLVCAPTGAGKTVVGEFAVHLALAAGGKCFYTTPLKALSNQKYTDLTARYGRNRIGLLTGDQSVNGDSPVVVMTTEVLRNMLYADSFALQGLSHVVMDEVHFIADRMRGPVWEEVILHLPDDVRMVSLSATVSNAEEFGGWVQTVRGDTTVVVDEHRPVPLWQHVLVGKRLFDLFDYDSNVDQSPVNPNLLRHIAHCREADRMSDWRNPRRRAGRGSGVRPRFYRSLARPEVIAILDAEGLLPAITFVFSRFGCDAAVQQCLRSPLRLTSEEERAQIAEVIDHRCGDLADADLAVLGYYEWREGLLRGLAAHHAGMLPAFRHAVEELFTAGLVKAVFATETLALGINMPARTVVLERLVKFNGKQHVPLTPGEYTQLTGRAGRRGIDVEGHAVVIWHPSEDTSGPSAVAGLASARTFPLRSSFVPSYNMTINLVHWMSPERAHALLEQSFAQYQADRSVVGLVRGIERCTQVLGDISSELGGPDAPILEYARLRARIAEMERAQSFVFRLQRKQAANDVLAALRRGDIITITHGRHGGLAVVLESARDSSNPRPLVLTEHRWAGRISSADYMGAAAPVGSMTLPKRVEHRQQRVRRDLASALRSAATRLSVPDIGDGVDGDKIGFNDGVLHDPELASLRAQLRRHRSNNAPGLDTQLQQAERYLRIERYNAQLQRKVAAATNSLARTFDRIVGLLIERDFIRGPADDPQVTDDGRLLARIYSESDLLVAECLRTGAWAGLRPAELAAVVSAVLYETRGDDGPGGPVDAEAPTPRLRQALQHTSRLSATLRADEQRHRIALSREPDDGFVGVIYCWARTGDLAAVLAAADASGNGAPLSAGDFVRWCRQVLDLLDQLRNAAPEPDLRATAKRAINDVRRGVVAVDAG</sequence>
<reference key="1">
    <citation type="journal article" date="2001" name="Nature">
        <title>Massive gene decay in the leprosy bacillus.</title>
        <authorList>
            <person name="Cole S.T."/>
            <person name="Eiglmeier K."/>
            <person name="Parkhill J."/>
            <person name="James K.D."/>
            <person name="Thomson N.R."/>
            <person name="Wheeler P.R."/>
            <person name="Honore N."/>
            <person name="Garnier T."/>
            <person name="Churcher C.M."/>
            <person name="Harris D.E."/>
            <person name="Mungall K.L."/>
            <person name="Basham D."/>
            <person name="Brown D."/>
            <person name="Chillingworth T."/>
            <person name="Connor R."/>
            <person name="Davies R.M."/>
            <person name="Devlin K."/>
            <person name="Duthoy S."/>
            <person name="Feltwell T."/>
            <person name="Fraser A."/>
            <person name="Hamlin N."/>
            <person name="Holroyd S."/>
            <person name="Hornsby T."/>
            <person name="Jagels K."/>
            <person name="Lacroix C."/>
            <person name="Maclean J."/>
            <person name="Moule S."/>
            <person name="Murphy L.D."/>
            <person name="Oliver K."/>
            <person name="Quail M.A."/>
            <person name="Rajandream M.A."/>
            <person name="Rutherford K.M."/>
            <person name="Rutter S."/>
            <person name="Seeger K."/>
            <person name="Simon S."/>
            <person name="Simmonds M."/>
            <person name="Skelton J."/>
            <person name="Squares R."/>
            <person name="Squares S."/>
            <person name="Stevens K."/>
            <person name="Taylor K."/>
            <person name="Whitehead S."/>
            <person name="Woodward J.R."/>
            <person name="Barrell B.G."/>
        </authorList>
    </citation>
    <scope>NUCLEOTIDE SEQUENCE [LARGE SCALE GENOMIC DNA]</scope>
    <source>
        <strain>TN</strain>
    </source>
</reference>
<name>HELY_MYCLE</name>
<evidence type="ECO:0000255" key="1">
    <source>
        <dbReference type="PROSITE-ProRule" id="PRU00541"/>
    </source>
</evidence>
<evidence type="ECO:0000255" key="2">
    <source>
        <dbReference type="PROSITE-ProRule" id="PRU00542"/>
    </source>
</evidence>
<evidence type="ECO:0000305" key="3"/>
<dbReference type="EC" id="3.6.4.-"/>
<dbReference type="EMBL" id="AL035310">
    <property type="protein sequence ID" value="CAA22943.1"/>
    <property type="molecule type" value="Genomic_DNA"/>
</dbReference>
<dbReference type="EMBL" id="AL583921">
    <property type="protein sequence ID" value="CAC31714.1"/>
    <property type="molecule type" value="Genomic_DNA"/>
</dbReference>
<dbReference type="PIR" id="G87075">
    <property type="entry name" value="G87075"/>
</dbReference>
<dbReference type="RefSeq" id="NP_301957.1">
    <property type="nucleotide sequence ID" value="NC_002677.1"/>
</dbReference>
<dbReference type="RefSeq" id="WP_010908278.1">
    <property type="nucleotide sequence ID" value="NC_002677.1"/>
</dbReference>
<dbReference type="SMR" id="Q9ZBD8"/>
<dbReference type="STRING" id="272631.gene:17575167"/>
<dbReference type="KEGG" id="mle:ML1333"/>
<dbReference type="PATRIC" id="fig|272631.5.peg.2453"/>
<dbReference type="Leproma" id="ML1333"/>
<dbReference type="eggNOG" id="COG4581">
    <property type="taxonomic scope" value="Bacteria"/>
</dbReference>
<dbReference type="HOGENOM" id="CLU_002902_4_1_11"/>
<dbReference type="OrthoDB" id="3229913at2"/>
<dbReference type="Proteomes" id="UP000000806">
    <property type="component" value="Chromosome"/>
</dbReference>
<dbReference type="GO" id="GO:0055087">
    <property type="term" value="C:Ski complex"/>
    <property type="evidence" value="ECO:0007669"/>
    <property type="project" value="TreeGrafter"/>
</dbReference>
<dbReference type="GO" id="GO:0005524">
    <property type="term" value="F:ATP binding"/>
    <property type="evidence" value="ECO:0007669"/>
    <property type="project" value="UniProtKB-KW"/>
</dbReference>
<dbReference type="GO" id="GO:0004386">
    <property type="term" value="F:helicase activity"/>
    <property type="evidence" value="ECO:0007669"/>
    <property type="project" value="UniProtKB-KW"/>
</dbReference>
<dbReference type="GO" id="GO:0016787">
    <property type="term" value="F:hydrolase activity"/>
    <property type="evidence" value="ECO:0007669"/>
    <property type="project" value="UniProtKB-KW"/>
</dbReference>
<dbReference type="GO" id="GO:0003676">
    <property type="term" value="F:nucleic acid binding"/>
    <property type="evidence" value="ECO:0007669"/>
    <property type="project" value="InterPro"/>
</dbReference>
<dbReference type="GO" id="GO:0070478">
    <property type="term" value="P:nuclear-transcribed mRNA catabolic process, 3'-5' exonucleolytic nonsense-mediated decay"/>
    <property type="evidence" value="ECO:0007669"/>
    <property type="project" value="TreeGrafter"/>
</dbReference>
<dbReference type="CDD" id="cd18795">
    <property type="entry name" value="SF2_C_Ski2"/>
    <property type="match status" value="1"/>
</dbReference>
<dbReference type="FunFam" id="1.10.3380.30:FF:000012">
    <property type="entry name" value="Probable helicase HelY"/>
    <property type="match status" value="1"/>
</dbReference>
<dbReference type="Gene3D" id="1.10.3380.30">
    <property type="match status" value="1"/>
</dbReference>
<dbReference type="Gene3D" id="3.40.50.300">
    <property type="entry name" value="P-loop containing nucleotide triphosphate hydrolases"/>
    <property type="match status" value="2"/>
</dbReference>
<dbReference type="InterPro" id="IPR011545">
    <property type="entry name" value="DEAD/DEAH_box_helicase_dom"/>
</dbReference>
<dbReference type="InterPro" id="IPR014001">
    <property type="entry name" value="Helicase_ATP-bd"/>
</dbReference>
<dbReference type="InterPro" id="IPR001650">
    <property type="entry name" value="Helicase_C-like"/>
</dbReference>
<dbReference type="InterPro" id="IPR027417">
    <property type="entry name" value="P-loop_NTPase"/>
</dbReference>
<dbReference type="InterPro" id="IPR050699">
    <property type="entry name" value="RNA-DNA_Helicase"/>
</dbReference>
<dbReference type="InterPro" id="IPR012961">
    <property type="entry name" value="Ski2/MTR4_C"/>
</dbReference>
<dbReference type="PANTHER" id="PTHR12131">
    <property type="entry name" value="ATP-DEPENDENT RNA AND DNA HELICASE"/>
    <property type="match status" value="1"/>
</dbReference>
<dbReference type="PANTHER" id="PTHR12131:SF1">
    <property type="entry name" value="ATP-DEPENDENT RNA HELICASE SUPV3L1, MITOCHONDRIAL-RELATED"/>
    <property type="match status" value="1"/>
</dbReference>
<dbReference type="Pfam" id="PF00270">
    <property type="entry name" value="DEAD"/>
    <property type="match status" value="1"/>
</dbReference>
<dbReference type="Pfam" id="PF08148">
    <property type="entry name" value="DSHCT"/>
    <property type="match status" value="1"/>
</dbReference>
<dbReference type="Pfam" id="PF00271">
    <property type="entry name" value="Helicase_C"/>
    <property type="match status" value="1"/>
</dbReference>
<dbReference type="SMART" id="SM00487">
    <property type="entry name" value="DEXDc"/>
    <property type="match status" value="1"/>
</dbReference>
<dbReference type="SMART" id="SM01142">
    <property type="entry name" value="DSHCT"/>
    <property type="match status" value="1"/>
</dbReference>
<dbReference type="SMART" id="SM00490">
    <property type="entry name" value="HELICc"/>
    <property type="match status" value="1"/>
</dbReference>
<dbReference type="SUPFAM" id="SSF52540">
    <property type="entry name" value="P-loop containing nucleoside triphosphate hydrolases"/>
    <property type="match status" value="1"/>
</dbReference>
<dbReference type="PROSITE" id="PS51192">
    <property type="entry name" value="HELICASE_ATP_BIND_1"/>
    <property type="match status" value="1"/>
</dbReference>
<dbReference type="PROSITE" id="PS51194">
    <property type="entry name" value="HELICASE_CTER"/>
    <property type="match status" value="1"/>
</dbReference>
<keyword id="KW-0067">ATP-binding</keyword>
<keyword id="KW-0347">Helicase</keyword>
<keyword id="KW-0378">Hydrolase</keyword>
<keyword id="KW-0547">Nucleotide-binding</keyword>
<keyword id="KW-1185">Reference proteome</keyword>